<comment type="similarity">
    <text evidence="2">Belongs to the glycosyl hydrolase 25 family.</text>
</comment>
<comment type="sequence caution" evidence="2">
    <conflict type="erroneous initiation">
        <sequence resource="EMBL-CDS" id="AAG57159"/>
    </conflict>
    <text>Extended N-terminus.</text>
</comment>
<proteinExistence type="inferred from homology"/>
<name>YEGX_ECO57</name>
<sequence length="272" mass="31569">MQLRITSRKKLTALLCALGLISIVAIYPRQTVNFFYSTAVQITDYIHFYGYRPVKSFAIHIPASYTIHGIDVSRWQERIDWQRVAKMRDNGIRLQFAFIKATEGEKLVDPYFSRNWQLSRENGLLRGAYHYFSPSVAAPVQARLFLQTVDFSQGDFPAVLDVEERGKLSAKELRKRVSQWLKMVEKSTGKKPVIYSGAVFYHTNLAGYFNEYPWWVAHYYQRRPDNDGMAWRFWQHSDRGQVDGINGSVDFNVFNGTEEELQAFVDGIKETP</sequence>
<accession>Q8X7H0</accession>
<protein>
    <recommendedName>
        <fullName>Uncharacterized protein YegX</fullName>
    </recommendedName>
</protein>
<dbReference type="EMBL" id="AE005174">
    <property type="protein sequence ID" value="AAG57159.1"/>
    <property type="status" value="ALT_INIT"/>
    <property type="molecule type" value="Genomic_DNA"/>
</dbReference>
<dbReference type="EMBL" id="BA000007">
    <property type="protein sequence ID" value="BAB36328.2"/>
    <property type="molecule type" value="Genomic_DNA"/>
</dbReference>
<dbReference type="PIR" id="A90992">
    <property type="entry name" value="A90992"/>
</dbReference>
<dbReference type="PIR" id="C85837">
    <property type="entry name" value="C85837"/>
</dbReference>
<dbReference type="RefSeq" id="NP_310932.2">
    <property type="nucleotide sequence ID" value="NC_002695.1"/>
</dbReference>
<dbReference type="RefSeq" id="WP_001301907.1">
    <property type="nucleotide sequence ID" value="NZ_VOAI01000013.1"/>
</dbReference>
<dbReference type="SMR" id="Q8X7H0"/>
<dbReference type="STRING" id="155864.Z3266"/>
<dbReference type="GeneID" id="916608"/>
<dbReference type="KEGG" id="ece:Z3266"/>
<dbReference type="KEGG" id="ecs:ECs_2905"/>
<dbReference type="PATRIC" id="fig|386585.9.peg.3037"/>
<dbReference type="eggNOG" id="COG3757">
    <property type="taxonomic scope" value="Bacteria"/>
</dbReference>
<dbReference type="HOGENOM" id="CLU_044973_3_2_6"/>
<dbReference type="OMA" id="TSWWTQC"/>
<dbReference type="Proteomes" id="UP000000558">
    <property type="component" value="Chromosome"/>
</dbReference>
<dbReference type="Proteomes" id="UP000002519">
    <property type="component" value="Chromosome"/>
</dbReference>
<dbReference type="GO" id="GO:0003796">
    <property type="term" value="F:lysozyme activity"/>
    <property type="evidence" value="ECO:0007669"/>
    <property type="project" value="InterPro"/>
</dbReference>
<dbReference type="GO" id="GO:0016052">
    <property type="term" value="P:carbohydrate catabolic process"/>
    <property type="evidence" value="ECO:0007669"/>
    <property type="project" value="TreeGrafter"/>
</dbReference>
<dbReference type="GO" id="GO:0016998">
    <property type="term" value="P:cell wall macromolecule catabolic process"/>
    <property type="evidence" value="ECO:0007669"/>
    <property type="project" value="InterPro"/>
</dbReference>
<dbReference type="GO" id="GO:0009253">
    <property type="term" value="P:peptidoglycan catabolic process"/>
    <property type="evidence" value="ECO:0007669"/>
    <property type="project" value="InterPro"/>
</dbReference>
<dbReference type="CDD" id="cd06524">
    <property type="entry name" value="GH25_YegX-like"/>
    <property type="match status" value="1"/>
</dbReference>
<dbReference type="Gene3D" id="3.20.20.80">
    <property type="entry name" value="Glycosidases"/>
    <property type="match status" value="1"/>
</dbReference>
<dbReference type="InterPro" id="IPR002053">
    <property type="entry name" value="Glyco_hydro_25"/>
</dbReference>
<dbReference type="InterPro" id="IPR008270">
    <property type="entry name" value="Glyco_hydro_25_AS"/>
</dbReference>
<dbReference type="InterPro" id="IPR018077">
    <property type="entry name" value="Glyco_hydro_fam25_subgr"/>
</dbReference>
<dbReference type="InterPro" id="IPR017853">
    <property type="entry name" value="Glycoside_hydrolase_SF"/>
</dbReference>
<dbReference type="PANTHER" id="PTHR34135">
    <property type="entry name" value="LYSOZYME"/>
    <property type="match status" value="1"/>
</dbReference>
<dbReference type="PANTHER" id="PTHR34135:SF2">
    <property type="entry name" value="LYSOZYME"/>
    <property type="match status" value="1"/>
</dbReference>
<dbReference type="Pfam" id="PF01183">
    <property type="entry name" value="Glyco_hydro_25"/>
    <property type="match status" value="1"/>
</dbReference>
<dbReference type="SMART" id="SM00641">
    <property type="entry name" value="Glyco_25"/>
    <property type="match status" value="1"/>
</dbReference>
<dbReference type="SUPFAM" id="SSF51445">
    <property type="entry name" value="(Trans)glycosidases"/>
    <property type="match status" value="1"/>
</dbReference>
<dbReference type="PROSITE" id="PS00953">
    <property type="entry name" value="GLYCOSYL_HYDROL_F25_1"/>
    <property type="match status" value="1"/>
</dbReference>
<dbReference type="PROSITE" id="PS51904">
    <property type="entry name" value="GLYCOSYL_HYDROL_F25_2"/>
    <property type="match status" value="1"/>
</dbReference>
<feature type="chain" id="PRO_0000208268" description="Uncharacterized protein YegX">
    <location>
        <begin position="1"/>
        <end position="272"/>
    </location>
</feature>
<feature type="active site" evidence="1">
    <location>
        <position position="163"/>
    </location>
</feature>
<reference key="1">
    <citation type="journal article" date="2001" name="Nature">
        <title>Genome sequence of enterohaemorrhagic Escherichia coli O157:H7.</title>
        <authorList>
            <person name="Perna N.T."/>
            <person name="Plunkett G. III"/>
            <person name="Burland V."/>
            <person name="Mau B."/>
            <person name="Glasner J.D."/>
            <person name="Rose D.J."/>
            <person name="Mayhew G.F."/>
            <person name="Evans P.S."/>
            <person name="Gregor J."/>
            <person name="Kirkpatrick H.A."/>
            <person name="Posfai G."/>
            <person name="Hackett J."/>
            <person name="Klink S."/>
            <person name="Boutin A."/>
            <person name="Shao Y."/>
            <person name="Miller L."/>
            <person name="Grotbeck E.J."/>
            <person name="Davis N.W."/>
            <person name="Lim A."/>
            <person name="Dimalanta E.T."/>
            <person name="Potamousis K."/>
            <person name="Apodaca J."/>
            <person name="Anantharaman T.S."/>
            <person name="Lin J."/>
            <person name="Yen G."/>
            <person name="Schwartz D.C."/>
            <person name="Welch R.A."/>
            <person name="Blattner F.R."/>
        </authorList>
    </citation>
    <scope>NUCLEOTIDE SEQUENCE [LARGE SCALE GENOMIC DNA]</scope>
    <source>
        <strain>O157:H7 / EDL933 / ATCC 700927 / EHEC</strain>
    </source>
</reference>
<reference key="2">
    <citation type="journal article" date="2001" name="DNA Res.">
        <title>Complete genome sequence of enterohemorrhagic Escherichia coli O157:H7 and genomic comparison with a laboratory strain K-12.</title>
        <authorList>
            <person name="Hayashi T."/>
            <person name="Makino K."/>
            <person name="Ohnishi M."/>
            <person name="Kurokawa K."/>
            <person name="Ishii K."/>
            <person name="Yokoyama K."/>
            <person name="Han C.-G."/>
            <person name="Ohtsubo E."/>
            <person name="Nakayama K."/>
            <person name="Murata T."/>
            <person name="Tanaka M."/>
            <person name="Tobe T."/>
            <person name="Iida T."/>
            <person name="Takami H."/>
            <person name="Honda T."/>
            <person name="Sasakawa C."/>
            <person name="Ogasawara N."/>
            <person name="Yasunaga T."/>
            <person name="Kuhara S."/>
            <person name="Shiba T."/>
            <person name="Hattori M."/>
            <person name="Shinagawa H."/>
        </authorList>
    </citation>
    <scope>NUCLEOTIDE SEQUENCE [LARGE SCALE GENOMIC DNA]</scope>
    <source>
        <strain>O157:H7 / Sakai / RIMD 0509952 / EHEC</strain>
    </source>
</reference>
<evidence type="ECO:0000255" key="1">
    <source>
        <dbReference type="PROSITE-ProRule" id="PRU10065"/>
    </source>
</evidence>
<evidence type="ECO:0000305" key="2"/>
<gene>
    <name type="primary">yegX</name>
    <name type="ordered locus">Z3266</name>
    <name type="ordered locus">ECs2905</name>
</gene>
<organism>
    <name type="scientific">Escherichia coli O157:H7</name>
    <dbReference type="NCBI Taxonomy" id="83334"/>
    <lineage>
        <taxon>Bacteria</taxon>
        <taxon>Pseudomonadati</taxon>
        <taxon>Pseudomonadota</taxon>
        <taxon>Gammaproteobacteria</taxon>
        <taxon>Enterobacterales</taxon>
        <taxon>Enterobacteriaceae</taxon>
        <taxon>Escherichia</taxon>
    </lineage>
</organism>
<keyword id="KW-0326">Glycosidase</keyword>
<keyword id="KW-0378">Hydrolase</keyword>
<keyword id="KW-1185">Reference proteome</keyword>